<evidence type="ECO:0000269" key="1">
    <source>
    </source>
</evidence>
<evidence type="ECO:0000303" key="2">
    <source>
    </source>
</evidence>
<evidence type="ECO:0000305" key="3"/>
<organism>
    <name type="scientific">Bombyx mori</name>
    <name type="common">Silk moth</name>
    <dbReference type="NCBI Taxonomy" id="7091"/>
    <lineage>
        <taxon>Eukaryota</taxon>
        <taxon>Metazoa</taxon>
        <taxon>Ecdysozoa</taxon>
        <taxon>Arthropoda</taxon>
        <taxon>Hexapoda</taxon>
        <taxon>Insecta</taxon>
        <taxon>Pterygota</taxon>
        <taxon>Neoptera</taxon>
        <taxon>Endopterygota</taxon>
        <taxon>Lepidoptera</taxon>
        <taxon>Glossata</taxon>
        <taxon>Ditrysia</taxon>
        <taxon>Bombycoidea</taxon>
        <taxon>Bombycidae</taxon>
        <taxon>Bombycinae</taxon>
        <taxon>Bombyx</taxon>
    </lineage>
</organism>
<proteinExistence type="evidence at protein level"/>
<protein>
    <recommendedName>
        <fullName>Unknown protein 9 from 2D-page</fullName>
    </recommendedName>
</protein>
<reference evidence="3" key="1">
    <citation type="journal article" date="2001" name="Yi Chuan Xue Bao">
        <title>Protein database for several tissues derived from five instar of silkworm.</title>
        <authorList>
            <person name="Zhong B.-X."/>
        </authorList>
    </citation>
    <scope>PROTEIN SEQUENCE</scope>
    <source>
        <strain evidence="1">Xinhang X Keming</strain>
        <tissue evidence="1">Body wall</tissue>
        <tissue evidence="1">Fat body</tissue>
    </source>
</reference>
<accession>P82207</accession>
<keyword id="KW-0903">Direct protein sequencing</keyword>
<keyword id="KW-1185">Reference proteome</keyword>
<dbReference type="InParanoid" id="P82207"/>
<dbReference type="Proteomes" id="UP000005204">
    <property type="component" value="Unassembled WGS sequence"/>
</dbReference>
<feature type="chain" id="PRO_0000274261" description="Unknown protein 9 from 2D-page">
    <location>
        <begin position="1"/>
        <end position="15" status="greater than"/>
    </location>
</feature>
<feature type="non-terminal residue" evidence="2">
    <location>
        <position position="15"/>
    </location>
</feature>
<name>UP09_BOMMO</name>
<sequence>SKSLFYQKQYDNINE</sequence>